<proteinExistence type="inferred from homology"/>
<protein>
    <recommendedName>
        <fullName evidence="1">Large ribosomal subunit protein bL17</fullName>
    </recommendedName>
    <alternativeName>
        <fullName evidence="2">50S ribosomal protein L17</fullName>
    </alternativeName>
</protein>
<accession>Q7NFF6</accession>
<reference key="1">
    <citation type="journal article" date="2003" name="DNA Res.">
        <title>Complete genome structure of Gloeobacter violaceus PCC 7421, a cyanobacterium that lacks thylakoids.</title>
        <authorList>
            <person name="Nakamura Y."/>
            <person name="Kaneko T."/>
            <person name="Sato S."/>
            <person name="Mimuro M."/>
            <person name="Miyashita H."/>
            <person name="Tsuchiya T."/>
            <person name="Sasamoto S."/>
            <person name="Watanabe A."/>
            <person name="Kawashima K."/>
            <person name="Kishida Y."/>
            <person name="Kiyokawa C."/>
            <person name="Kohara M."/>
            <person name="Matsumoto M."/>
            <person name="Matsuno A."/>
            <person name="Nakazaki N."/>
            <person name="Shimpo S."/>
            <person name="Takeuchi C."/>
            <person name="Yamada M."/>
            <person name="Tabata S."/>
        </authorList>
    </citation>
    <scope>NUCLEOTIDE SEQUENCE [LARGE SCALE GENOMIC DNA]</scope>
    <source>
        <strain>ATCC 29082 / PCC 7421</strain>
    </source>
</reference>
<gene>
    <name evidence="1" type="primary">rplQ</name>
    <name evidence="1" type="synonym">rpl17</name>
    <name type="ordered locus">gll3570</name>
</gene>
<comment type="subunit">
    <text evidence="1">Part of the 50S ribosomal subunit. Contacts protein L32.</text>
</comment>
<comment type="similarity">
    <text evidence="1">Belongs to the bacterial ribosomal protein bL17 family.</text>
</comment>
<organism>
    <name type="scientific">Gloeobacter violaceus (strain ATCC 29082 / PCC 7421)</name>
    <dbReference type="NCBI Taxonomy" id="251221"/>
    <lineage>
        <taxon>Bacteria</taxon>
        <taxon>Bacillati</taxon>
        <taxon>Cyanobacteriota</taxon>
        <taxon>Cyanophyceae</taxon>
        <taxon>Gloeobacterales</taxon>
        <taxon>Gloeobacteraceae</taxon>
        <taxon>Gloeobacter</taxon>
    </lineage>
</organism>
<feature type="chain" id="PRO_1000055835" description="Large ribosomal subunit protein bL17">
    <location>
        <begin position="1"/>
        <end position="116"/>
    </location>
</feature>
<name>RL17_GLOVI</name>
<dbReference type="EMBL" id="BA000045">
    <property type="protein sequence ID" value="BAC91511.1"/>
    <property type="molecule type" value="Genomic_DNA"/>
</dbReference>
<dbReference type="RefSeq" id="NP_926516.1">
    <property type="nucleotide sequence ID" value="NC_005125.1"/>
</dbReference>
<dbReference type="RefSeq" id="WP_011143559.1">
    <property type="nucleotide sequence ID" value="NC_005125.1"/>
</dbReference>
<dbReference type="SMR" id="Q7NFF6"/>
<dbReference type="FunCoup" id="Q7NFF6">
    <property type="interactions" value="387"/>
</dbReference>
<dbReference type="STRING" id="251221.gene:10761085"/>
<dbReference type="EnsemblBacteria" id="BAC91511">
    <property type="protein sequence ID" value="BAC91511"/>
    <property type="gene ID" value="BAC91511"/>
</dbReference>
<dbReference type="KEGG" id="gvi:gll3570"/>
<dbReference type="PATRIC" id="fig|251221.4.peg.3603"/>
<dbReference type="eggNOG" id="COG0203">
    <property type="taxonomic scope" value="Bacteria"/>
</dbReference>
<dbReference type="HOGENOM" id="CLU_074407_2_2_3"/>
<dbReference type="InParanoid" id="Q7NFF6"/>
<dbReference type="OrthoDB" id="9809073at2"/>
<dbReference type="PhylomeDB" id="Q7NFF6"/>
<dbReference type="Proteomes" id="UP000000557">
    <property type="component" value="Chromosome"/>
</dbReference>
<dbReference type="GO" id="GO:0022625">
    <property type="term" value="C:cytosolic large ribosomal subunit"/>
    <property type="evidence" value="ECO:0000318"/>
    <property type="project" value="GO_Central"/>
</dbReference>
<dbReference type="GO" id="GO:0003735">
    <property type="term" value="F:structural constituent of ribosome"/>
    <property type="evidence" value="ECO:0000318"/>
    <property type="project" value="GO_Central"/>
</dbReference>
<dbReference type="GO" id="GO:0006412">
    <property type="term" value="P:translation"/>
    <property type="evidence" value="ECO:0007669"/>
    <property type="project" value="UniProtKB-UniRule"/>
</dbReference>
<dbReference type="FunFam" id="3.90.1030.10:FF:000001">
    <property type="entry name" value="50S ribosomal protein L17"/>
    <property type="match status" value="1"/>
</dbReference>
<dbReference type="Gene3D" id="3.90.1030.10">
    <property type="entry name" value="Ribosomal protein L17"/>
    <property type="match status" value="1"/>
</dbReference>
<dbReference type="HAMAP" id="MF_01368">
    <property type="entry name" value="Ribosomal_bL17"/>
    <property type="match status" value="1"/>
</dbReference>
<dbReference type="InterPro" id="IPR000456">
    <property type="entry name" value="Ribosomal_bL17"/>
</dbReference>
<dbReference type="InterPro" id="IPR047859">
    <property type="entry name" value="Ribosomal_bL17_CS"/>
</dbReference>
<dbReference type="InterPro" id="IPR036373">
    <property type="entry name" value="Ribosomal_bL17_sf"/>
</dbReference>
<dbReference type="NCBIfam" id="TIGR00059">
    <property type="entry name" value="L17"/>
    <property type="match status" value="1"/>
</dbReference>
<dbReference type="PANTHER" id="PTHR14413:SF16">
    <property type="entry name" value="LARGE RIBOSOMAL SUBUNIT PROTEIN BL17M"/>
    <property type="match status" value="1"/>
</dbReference>
<dbReference type="PANTHER" id="PTHR14413">
    <property type="entry name" value="RIBOSOMAL PROTEIN L17"/>
    <property type="match status" value="1"/>
</dbReference>
<dbReference type="Pfam" id="PF01196">
    <property type="entry name" value="Ribosomal_L17"/>
    <property type="match status" value="1"/>
</dbReference>
<dbReference type="SUPFAM" id="SSF64263">
    <property type="entry name" value="Prokaryotic ribosomal protein L17"/>
    <property type="match status" value="1"/>
</dbReference>
<dbReference type="PROSITE" id="PS01167">
    <property type="entry name" value="RIBOSOMAL_L17"/>
    <property type="match status" value="1"/>
</dbReference>
<sequence>MRHRCRVPKLGRPADQRDALIRTLTTELLRHGRISTTLARAKVIRSEADRMITLAKDGSLAARRQASGFLYDPELVQSVFAAAQERYGSRRGGYTRILRTVARRGDNSPMAIIELV</sequence>
<evidence type="ECO:0000255" key="1">
    <source>
        <dbReference type="HAMAP-Rule" id="MF_01368"/>
    </source>
</evidence>
<evidence type="ECO:0000305" key="2"/>
<keyword id="KW-1185">Reference proteome</keyword>
<keyword id="KW-0687">Ribonucleoprotein</keyword>
<keyword id="KW-0689">Ribosomal protein</keyword>